<organism>
    <name type="scientific">Tetradesmus obliquus</name>
    <name type="common">Green alga</name>
    <name type="synonym">Acutodesmus obliquus</name>
    <dbReference type="NCBI Taxonomy" id="3088"/>
    <lineage>
        <taxon>Eukaryota</taxon>
        <taxon>Viridiplantae</taxon>
        <taxon>Chlorophyta</taxon>
        <taxon>core chlorophytes</taxon>
        <taxon>Chlorophyceae</taxon>
        <taxon>CS clade</taxon>
        <taxon>Sphaeropleales</taxon>
        <taxon>Scenedesmaceae</taxon>
        <taxon>Tetradesmus</taxon>
    </lineage>
</organism>
<dbReference type="EMBL" id="DQ396875">
    <property type="protein sequence ID" value="ABD48242.1"/>
    <property type="molecule type" value="Genomic_DNA"/>
</dbReference>
<dbReference type="RefSeq" id="YP_635960.1">
    <property type="nucleotide sequence ID" value="NC_008101.1"/>
</dbReference>
<dbReference type="SMR" id="Q1KVW4"/>
<dbReference type="GeneID" id="4099828"/>
<dbReference type="GO" id="GO:0009507">
    <property type="term" value="C:chloroplast"/>
    <property type="evidence" value="ECO:0007669"/>
    <property type="project" value="UniProtKB-SubCell"/>
</dbReference>
<dbReference type="GO" id="GO:0015935">
    <property type="term" value="C:small ribosomal subunit"/>
    <property type="evidence" value="ECO:0007669"/>
    <property type="project" value="InterPro"/>
</dbReference>
<dbReference type="GO" id="GO:0019843">
    <property type="term" value="F:rRNA binding"/>
    <property type="evidence" value="ECO:0007669"/>
    <property type="project" value="UniProtKB-UniRule"/>
</dbReference>
<dbReference type="GO" id="GO:0003735">
    <property type="term" value="F:structural constituent of ribosome"/>
    <property type="evidence" value="ECO:0007669"/>
    <property type="project" value="InterPro"/>
</dbReference>
<dbReference type="GO" id="GO:0006412">
    <property type="term" value="P:translation"/>
    <property type="evidence" value="ECO:0007669"/>
    <property type="project" value="UniProtKB-UniRule"/>
</dbReference>
<dbReference type="CDD" id="cd14871">
    <property type="entry name" value="uS7_Chloroplast"/>
    <property type="match status" value="1"/>
</dbReference>
<dbReference type="Gene3D" id="1.10.455.10">
    <property type="entry name" value="Ribosomal protein S7 domain"/>
    <property type="match status" value="1"/>
</dbReference>
<dbReference type="HAMAP" id="MF_00480_B">
    <property type="entry name" value="Ribosomal_uS7_B"/>
    <property type="match status" value="1"/>
</dbReference>
<dbReference type="InterPro" id="IPR000235">
    <property type="entry name" value="Ribosomal_uS7"/>
</dbReference>
<dbReference type="InterPro" id="IPR005717">
    <property type="entry name" value="Ribosomal_uS7_bac/org-type"/>
</dbReference>
<dbReference type="InterPro" id="IPR023798">
    <property type="entry name" value="Ribosomal_uS7_dom"/>
</dbReference>
<dbReference type="InterPro" id="IPR036823">
    <property type="entry name" value="Ribosomal_uS7_dom_sf"/>
</dbReference>
<dbReference type="NCBIfam" id="TIGR01029">
    <property type="entry name" value="rpsG_bact"/>
    <property type="match status" value="1"/>
</dbReference>
<dbReference type="PANTHER" id="PTHR11205">
    <property type="entry name" value="RIBOSOMAL PROTEIN S7"/>
    <property type="match status" value="1"/>
</dbReference>
<dbReference type="Pfam" id="PF00177">
    <property type="entry name" value="Ribosomal_S7"/>
    <property type="match status" value="1"/>
</dbReference>
<dbReference type="PIRSF" id="PIRSF002122">
    <property type="entry name" value="RPS7p_RPS7a_RPS5e_RPS7o"/>
    <property type="match status" value="1"/>
</dbReference>
<dbReference type="SUPFAM" id="SSF47973">
    <property type="entry name" value="Ribosomal protein S7"/>
    <property type="match status" value="1"/>
</dbReference>
<comment type="function">
    <text evidence="1">One of the primary rRNA binding proteins, it binds directly to 16S rRNA where it nucleates assembly of the head domain of the 30S subunit.</text>
</comment>
<comment type="subunit">
    <text>Part of the 30S ribosomal subunit.</text>
</comment>
<comment type="subcellular location">
    <subcellularLocation>
        <location>Plastid</location>
        <location>Chloroplast</location>
    </subcellularLocation>
</comment>
<comment type="similarity">
    <text evidence="2">Belongs to the universal ribosomal protein uS7 family.</text>
</comment>
<gene>
    <name type="primary">rps7</name>
</gene>
<protein>
    <recommendedName>
        <fullName evidence="2">Small ribosomal subunit protein uS7c</fullName>
    </recommendedName>
    <alternativeName>
        <fullName>30S ribosomal protein S7, chloroplastic</fullName>
    </alternativeName>
</protein>
<keyword id="KW-0150">Chloroplast</keyword>
<keyword id="KW-0934">Plastid</keyword>
<keyword id="KW-0687">Ribonucleoprotein</keyword>
<keyword id="KW-0689">Ribosomal protein</keyword>
<keyword id="KW-0694">RNA-binding</keyword>
<keyword id="KW-0699">rRNA-binding</keyword>
<proteinExistence type="inferred from homology"/>
<geneLocation type="chloroplast"/>
<name>RR7_TETOB</name>
<sequence length="167" mass="18887">MPRRPIQKKRSVLPDPIYNSISVHMLVNRVMKNGKKSLAYKIVYNTLKNIGETTQQNPVEVFEAALENVMPKVEVQPRRRAGSVQMVPSILRSTERGQATALRWILESCEKKSAKSMVSKLQTEILDAYEKKGNAIKKKEELHKIAANNAMYSNRPQIILNAVSIVS</sequence>
<feature type="chain" id="PRO_0000277055" description="Small ribosomal subunit protein uS7c">
    <location>
        <begin position="1"/>
        <end position="167"/>
    </location>
</feature>
<reference key="1">
    <citation type="journal article" date="2006" name="BMC Evol. Biol.">
        <title>The complete chloroplast genome sequence of the chlorophycean green alga Scenedesmus obliquus reveals a compact gene organization and a biased distribution of genes on the two DNA strands.</title>
        <authorList>
            <person name="de Cambiaire J.-C."/>
            <person name="Otis C."/>
            <person name="Lemieux C."/>
            <person name="Turmel M."/>
        </authorList>
    </citation>
    <scope>NUCLEOTIDE SEQUENCE [LARGE SCALE GENOMIC DNA]</scope>
    <source>
        <strain>UTEX 393</strain>
    </source>
</reference>
<evidence type="ECO:0000250" key="1"/>
<evidence type="ECO:0000305" key="2"/>
<accession>Q1KVW4</accession>